<comment type="function">
    <text evidence="1">Molecular chaperone capable of stabilizing a range of proteins. Seems to fulfill an ATP-independent, HSP70-like function in archaeal de novo protein folding.</text>
</comment>
<comment type="subunit">
    <text evidence="1">Heterohexamer of two alpha and four beta subunits.</text>
</comment>
<comment type="subcellular location">
    <subcellularLocation>
        <location evidence="1">Cytoplasm</location>
    </subcellularLocation>
</comment>
<comment type="similarity">
    <text evidence="1">Belongs to the prefoldin subunit beta family.</text>
</comment>
<sequence length="125" mass="14195">MAQVPPSLQDLANRYNQAQAQLQSVLLRKQQYEAELREVDKAISEIEKLPQDAKIFKSVGNFLVQQSRDAALQELKDRKELLELHVKTLAKQESMLREQLEKLKEELNKELAKLRGGQEAAKGGG</sequence>
<keyword id="KW-0143">Chaperone</keyword>
<keyword id="KW-0963">Cytoplasm</keyword>
<feature type="chain" id="PRO_0000300777" description="Prefoldin subunit beta">
    <location>
        <begin position="1"/>
        <end position="125"/>
    </location>
</feature>
<organism>
    <name type="scientific">Pyrobaculum calidifontis (strain DSM 21063 / JCM 11548 / VA1)</name>
    <dbReference type="NCBI Taxonomy" id="410359"/>
    <lineage>
        <taxon>Archaea</taxon>
        <taxon>Thermoproteota</taxon>
        <taxon>Thermoprotei</taxon>
        <taxon>Thermoproteales</taxon>
        <taxon>Thermoproteaceae</taxon>
        <taxon>Pyrobaculum</taxon>
    </lineage>
</organism>
<name>PFDB_PYRCJ</name>
<protein>
    <recommendedName>
        <fullName evidence="1">Prefoldin subunit beta</fullName>
    </recommendedName>
    <alternativeName>
        <fullName evidence="1">GimC subunit beta</fullName>
    </alternativeName>
</protein>
<accession>A3MUN9</accession>
<proteinExistence type="inferred from homology"/>
<reference key="1">
    <citation type="submission" date="2007-02" db="EMBL/GenBank/DDBJ databases">
        <title>Complete sequence of Pyrobaculum calidifontis JCM 11548.</title>
        <authorList>
            <consortium name="US DOE Joint Genome Institute"/>
            <person name="Copeland A."/>
            <person name="Lucas S."/>
            <person name="Lapidus A."/>
            <person name="Barry K."/>
            <person name="Glavina del Rio T."/>
            <person name="Dalin E."/>
            <person name="Tice H."/>
            <person name="Pitluck S."/>
            <person name="Chain P."/>
            <person name="Malfatti S."/>
            <person name="Shin M."/>
            <person name="Vergez L."/>
            <person name="Schmutz J."/>
            <person name="Larimer F."/>
            <person name="Land M."/>
            <person name="Hauser L."/>
            <person name="Kyrpides N."/>
            <person name="Mikhailova N."/>
            <person name="Cozen A.E."/>
            <person name="Fitz-Gibbon S.T."/>
            <person name="House C.H."/>
            <person name="Saltikov C."/>
            <person name="Lowe T.M."/>
            <person name="Richardson P."/>
        </authorList>
    </citation>
    <scope>NUCLEOTIDE SEQUENCE [LARGE SCALE GENOMIC DNA]</scope>
    <source>
        <strain>DSM 21063 / JCM 11548 / VA1</strain>
    </source>
</reference>
<evidence type="ECO:0000255" key="1">
    <source>
        <dbReference type="HAMAP-Rule" id="MF_00307"/>
    </source>
</evidence>
<gene>
    <name evidence="1" type="primary">pfdB</name>
    <name type="ordered locus">Pcal_0931</name>
</gene>
<dbReference type="EMBL" id="CP000561">
    <property type="protein sequence ID" value="ABO08356.1"/>
    <property type="molecule type" value="Genomic_DNA"/>
</dbReference>
<dbReference type="RefSeq" id="WP_011849614.1">
    <property type="nucleotide sequence ID" value="NC_009073.1"/>
</dbReference>
<dbReference type="SMR" id="A3MUN9"/>
<dbReference type="STRING" id="410359.Pcal_0931"/>
<dbReference type="GeneID" id="4910147"/>
<dbReference type="KEGG" id="pcl:Pcal_0931"/>
<dbReference type="eggNOG" id="arCOG01342">
    <property type="taxonomic scope" value="Archaea"/>
</dbReference>
<dbReference type="HOGENOM" id="CLU_131909_2_1_2"/>
<dbReference type="OrthoDB" id="27242at2157"/>
<dbReference type="Proteomes" id="UP000001431">
    <property type="component" value="Chromosome"/>
</dbReference>
<dbReference type="GO" id="GO:0005737">
    <property type="term" value="C:cytoplasm"/>
    <property type="evidence" value="ECO:0007669"/>
    <property type="project" value="UniProtKB-SubCell"/>
</dbReference>
<dbReference type="GO" id="GO:0016272">
    <property type="term" value="C:prefoldin complex"/>
    <property type="evidence" value="ECO:0007669"/>
    <property type="project" value="UniProtKB-UniRule"/>
</dbReference>
<dbReference type="GO" id="GO:0051087">
    <property type="term" value="F:protein-folding chaperone binding"/>
    <property type="evidence" value="ECO:0007669"/>
    <property type="project" value="TreeGrafter"/>
</dbReference>
<dbReference type="GO" id="GO:0051082">
    <property type="term" value="F:unfolded protein binding"/>
    <property type="evidence" value="ECO:0007669"/>
    <property type="project" value="UniProtKB-UniRule"/>
</dbReference>
<dbReference type="GO" id="GO:0051131">
    <property type="term" value="P:chaperone-mediated protein complex assembly"/>
    <property type="evidence" value="ECO:0007669"/>
    <property type="project" value="TreeGrafter"/>
</dbReference>
<dbReference type="GO" id="GO:0006457">
    <property type="term" value="P:protein folding"/>
    <property type="evidence" value="ECO:0007669"/>
    <property type="project" value="UniProtKB-UniRule"/>
</dbReference>
<dbReference type="CDD" id="cd23162">
    <property type="entry name" value="Prefoldin_beta_GimC"/>
    <property type="match status" value="1"/>
</dbReference>
<dbReference type="FunFam" id="1.10.287.370:FF:000013">
    <property type="entry name" value="Prefoldin subunit beta"/>
    <property type="match status" value="1"/>
</dbReference>
<dbReference type="Gene3D" id="1.10.287.370">
    <property type="match status" value="1"/>
</dbReference>
<dbReference type="HAMAP" id="MF_00307">
    <property type="entry name" value="PfdB"/>
    <property type="match status" value="1"/>
</dbReference>
<dbReference type="InterPro" id="IPR002777">
    <property type="entry name" value="PFD_beta-like"/>
</dbReference>
<dbReference type="InterPro" id="IPR012713">
    <property type="entry name" value="PfdB"/>
</dbReference>
<dbReference type="InterPro" id="IPR009053">
    <property type="entry name" value="Prefoldin"/>
</dbReference>
<dbReference type="NCBIfam" id="TIGR02338">
    <property type="entry name" value="gimC_beta"/>
    <property type="match status" value="1"/>
</dbReference>
<dbReference type="PANTHER" id="PTHR21431">
    <property type="entry name" value="PREFOLDIN SUBUNIT 6"/>
    <property type="match status" value="1"/>
</dbReference>
<dbReference type="PANTHER" id="PTHR21431:SF0">
    <property type="entry name" value="PREFOLDIN SUBUNIT 6"/>
    <property type="match status" value="1"/>
</dbReference>
<dbReference type="Pfam" id="PF01920">
    <property type="entry name" value="Prefoldin_2"/>
    <property type="match status" value="1"/>
</dbReference>
<dbReference type="SUPFAM" id="SSF46579">
    <property type="entry name" value="Prefoldin"/>
    <property type="match status" value="1"/>
</dbReference>